<feature type="chain" id="PRO_0000216042" description="Chalcone synthase">
    <location>
        <begin position="1"/>
        <end position="396"/>
    </location>
</feature>
<feature type="active site" evidence="1">
    <location>
        <position position="169"/>
    </location>
</feature>
<feature type="helix" evidence="3">
    <location>
        <begin position="5"/>
        <end position="7"/>
    </location>
</feature>
<feature type="helix" evidence="3">
    <location>
        <begin position="9"/>
        <end position="16"/>
    </location>
</feature>
<feature type="strand" evidence="3">
    <location>
        <begin position="23"/>
        <end position="30"/>
    </location>
</feature>
<feature type="strand" evidence="3">
    <location>
        <begin position="35"/>
        <end position="37"/>
    </location>
</feature>
<feature type="helix" evidence="3">
    <location>
        <begin position="38"/>
        <end position="40"/>
    </location>
</feature>
<feature type="helix" evidence="3">
    <location>
        <begin position="41"/>
        <end position="48"/>
    </location>
</feature>
<feature type="helix" evidence="3">
    <location>
        <begin position="55"/>
        <end position="66"/>
    </location>
</feature>
<feature type="strand" evidence="3">
    <location>
        <begin position="72"/>
        <end position="74"/>
    </location>
</feature>
<feature type="helix" evidence="3">
    <location>
        <begin position="79"/>
        <end position="84"/>
    </location>
</feature>
<feature type="helix" evidence="3">
    <location>
        <begin position="86"/>
        <end position="88"/>
    </location>
</feature>
<feature type="strand" evidence="3">
    <location>
        <begin position="90"/>
        <end position="92"/>
    </location>
</feature>
<feature type="helix" evidence="3">
    <location>
        <begin position="96"/>
        <end position="122"/>
    </location>
</feature>
<feature type="helix" evidence="3">
    <location>
        <begin position="126"/>
        <end position="128"/>
    </location>
</feature>
<feature type="strand" evidence="3">
    <location>
        <begin position="131"/>
        <end position="138"/>
    </location>
</feature>
<feature type="helix" evidence="3">
    <location>
        <begin position="145"/>
        <end position="153"/>
    </location>
</feature>
<feature type="strand" evidence="3">
    <location>
        <begin position="160"/>
        <end position="166"/>
    </location>
</feature>
<feature type="helix" evidence="3">
    <location>
        <begin position="171"/>
        <end position="184"/>
    </location>
</feature>
<feature type="strand" evidence="3">
    <location>
        <begin position="190"/>
        <end position="197"/>
    </location>
</feature>
<feature type="helix" evidence="3">
    <location>
        <begin position="199"/>
        <end position="201"/>
    </location>
</feature>
<feature type="helix" evidence="3">
    <location>
        <begin position="212"/>
        <end position="219"/>
    </location>
</feature>
<feature type="strand" evidence="3">
    <location>
        <begin position="223"/>
        <end position="232"/>
    </location>
</feature>
<feature type="turn" evidence="3">
    <location>
        <begin position="235"/>
        <end position="237"/>
    </location>
</feature>
<feature type="strand" evidence="3">
    <location>
        <begin position="241"/>
        <end position="251"/>
    </location>
</feature>
<feature type="strand" evidence="3">
    <location>
        <begin position="258"/>
        <end position="264"/>
    </location>
</feature>
<feature type="strand" evidence="3">
    <location>
        <begin position="267"/>
        <end position="271"/>
    </location>
</feature>
<feature type="helix" evidence="3">
    <location>
        <begin position="276"/>
        <end position="292"/>
    </location>
</feature>
<feature type="helix" evidence="3">
    <location>
        <begin position="293"/>
        <end position="295"/>
    </location>
</feature>
<feature type="helix" evidence="3">
    <location>
        <begin position="300"/>
        <end position="302"/>
    </location>
</feature>
<feature type="strand" evidence="3">
    <location>
        <begin position="303"/>
        <end position="307"/>
    </location>
</feature>
<feature type="helix" evidence="3">
    <location>
        <begin position="312"/>
        <end position="322"/>
    </location>
</feature>
<feature type="turn" evidence="3">
    <location>
        <begin position="326"/>
        <end position="329"/>
    </location>
</feature>
<feature type="helix" evidence="3">
    <location>
        <begin position="330"/>
        <end position="339"/>
    </location>
</feature>
<feature type="helix" evidence="3">
    <location>
        <begin position="343"/>
        <end position="345"/>
    </location>
</feature>
<feature type="helix" evidence="3">
    <location>
        <begin position="346"/>
        <end position="360"/>
    </location>
</feature>
<feature type="turn" evidence="3">
    <location>
        <begin position="366"/>
        <end position="369"/>
    </location>
</feature>
<feature type="strand" evidence="3">
    <location>
        <begin position="371"/>
        <end position="379"/>
    </location>
</feature>
<feature type="turn" evidence="3">
    <location>
        <begin position="380"/>
        <end position="382"/>
    </location>
</feature>
<feature type="strand" evidence="3">
    <location>
        <begin position="383"/>
        <end position="391"/>
    </location>
</feature>
<gene>
    <name type="primary">CHS</name>
</gene>
<reference key="1">
    <citation type="journal article" date="1992" name="Plant Mol. Biol.">
        <title>Molecular analysis of chalcone and dihydropinosylvin synthase from Scots pine (Pinus sylvestris), and differential regulation of these and related enzyme activities in stressed plants.</title>
        <authorList>
            <person name="Fliegmann J."/>
            <person name="Schroeder G."/>
            <person name="Schanz S."/>
            <person name="Britsch L."/>
            <person name="Schroeder J."/>
        </authorList>
    </citation>
    <scope>NUCLEOTIDE SEQUENCE [GENOMIC DNA]</scope>
</reference>
<keyword id="KW-0002">3D-structure</keyword>
<keyword id="KW-0012">Acyltransferase</keyword>
<keyword id="KW-0284">Flavonoid biosynthesis</keyword>
<keyword id="KW-0808">Transferase</keyword>
<proteinExistence type="evidence at protein level"/>
<evidence type="ECO:0000255" key="1">
    <source>
        <dbReference type="PROSITE-ProRule" id="PRU10023"/>
    </source>
</evidence>
<evidence type="ECO:0000305" key="2"/>
<evidence type="ECO:0007829" key="3">
    <source>
        <dbReference type="PDB" id="6DXA"/>
    </source>
</evidence>
<accession>P30079</accession>
<sequence length="396" mass="43294">MAAGMMKDLEAFRKAQRADGPATILAIGTATPPNAVDQSSYPDYYFKITNSEHMTELKEKFRRMCDKSAIKKRYMYLTEEILKENPKVCEYMAPSLDARQDMVVVEVPRLGKEAAAKAIKEWGQPKSKITHVIFCTTSGVDMPGADYQLTKLLGLRPSVKRVMMYQQGCFAGGTVLRVAKDLAENNRGARVLVVCSEITAVTFRGPSDTHLDSMVGQALFGDGAAALIVGADPVPEVEKPCFELMWTAQTILPDSDGAIDGHLREVGLTFHLLKDVPGLISKNIEKSLVEAFQQFGISDWNQLFWIAHPGGPAILDQVEAKLNLDPKKLSATRQVLSDYGNMSSACVHFILDEMRKSSKEKGCSTTGEGLDVGVLFGFGPGLTVETVVLKSVPLLD</sequence>
<dbReference type="EC" id="2.3.1.74"/>
<dbReference type="EMBL" id="X60754">
    <property type="protein sequence ID" value="CAA43166.1"/>
    <property type="molecule type" value="Genomic_DNA"/>
</dbReference>
<dbReference type="PIR" id="S20515">
    <property type="entry name" value="S20515"/>
</dbReference>
<dbReference type="PDB" id="6DXA">
    <property type="method" value="X-ray"/>
    <property type="resolution" value="2.01 A"/>
    <property type="chains" value="A/B=1-396"/>
</dbReference>
<dbReference type="PDBsum" id="6DXA"/>
<dbReference type="SMR" id="P30079"/>
<dbReference type="BioCyc" id="MetaCyc:MONOMER-11832"/>
<dbReference type="UniPathway" id="UPA00154"/>
<dbReference type="GO" id="GO:0016210">
    <property type="term" value="F:naringenin-chalcone synthase activity"/>
    <property type="evidence" value="ECO:0007669"/>
    <property type="project" value="UniProtKB-EC"/>
</dbReference>
<dbReference type="GO" id="GO:0009813">
    <property type="term" value="P:flavonoid biosynthetic process"/>
    <property type="evidence" value="ECO:0007669"/>
    <property type="project" value="UniProtKB-UniPathway"/>
</dbReference>
<dbReference type="GO" id="GO:0030639">
    <property type="term" value="P:polyketide biosynthetic process"/>
    <property type="evidence" value="ECO:0007669"/>
    <property type="project" value="TreeGrafter"/>
</dbReference>
<dbReference type="CDD" id="cd00831">
    <property type="entry name" value="CHS_like"/>
    <property type="match status" value="1"/>
</dbReference>
<dbReference type="FunFam" id="3.40.47.10:FF:000014">
    <property type="entry name" value="Chalcone synthase 1"/>
    <property type="match status" value="1"/>
</dbReference>
<dbReference type="FunFam" id="3.40.47.10:FF:000025">
    <property type="entry name" value="Chalcone synthase 2"/>
    <property type="match status" value="1"/>
</dbReference>
<dbReference type="Gene3D" id="3.40.47.10">
    <property type="match status" value="2"/>
</dbReference>
<dbReference type="InterPro" id="IPR012328">
    <property type="entry name" value="Chalcone/stilbene_synt_C"/>
</dbReference>
<dbReference type="InterPro" id="IPR001099">
    <property type="entry name" value="Chalcone/stilbene_synt_N"/>
</dbReference>
<dbReference type="InterPro" id="IPR018088">
    <property type="entry name" value="Chalcone/stilbene_synthase_AS"/>
</dbReference>
<dbReference type="InterPro" id="IPR011141">
    <property type="entry name" value="Polyketide_synthase_type-III"/>
</dbReference>
<dbReference type="InterPro" id="IPR016039">
    <property type="entry name" value="Thiolase-like"/>
</dbReference>
<dbReference type="PANTHER" id="PTHR11877:SF14">
    <property type="entry name" value="CHALCONE SYNTHASE"/>
    <property type="match status" value="1"/>
</dbReference>
<dbReference type="PANTHER" id="PTHR11877">
    <property type="entry name" value="HYDROXYMETHYLGLUTARYL-COA SYNTHASE"/>
    <property type="match status" value="1"/>
</dbReference>
<dbReference type="Pfam" id="PF02797">
    <property type="entry name" value="Chal_sti_synt_C"/>
    <property type="match status" value="1"/>
</dbReference>
<dbReference type="Pfam" id="PF00195">
    <property type="entry name" value="Chal_sti_synt_N"/>
    <property type="match status" value="1"/>
</dbReference>
<dbReference type="PIRSF" id="PIRSF000451">
    <property type="entry name" value="PKS_III"/>
    <property type="match status" value="1"/>
</dbReference>
<dbReference type="SUPFAM" id="SSF53901">
    <property type="entry name" value="Thiolase-like"/>
    <property type="match status" value="2"/>
</dbReference>
<dbReference type="PROSITE" id="PS00441">
    <property type="entry name" value="CHALCONE_SYNTH"/>
    <property type="match status" value="1"/>
</dbReference>
<comment type="function">
    <text>The primary product of this enzyme is 4,2',4',6'-tetrahydroxychalcone (also termed naringenin-chalcone or chalcone) which can under specific conditions spontaneously isomerize into naringenin.</text>
</comment>
<comment type="catalytic activity">
    <reaction evidence="1">
        <text>(E)-4-coumaroyl-CoA + 3 malonyl-CoA + 3 H(+) = 2',4,4',6'-tetrahydroxychalcone + 3 CO2 + 4 CoA</text>
        <dbReference type="Rhea" id="RHEA:11128"/>
        <dbReference type="ChEBI" id="CHEBI:15378"/>
        <dbReference type="ChEBI" id="CHEBI:15413"/>
        <dbReference type="ChEBI" id="CHEBI:16526"/>
        <dbReference type="ChEBI" id="CHEBI:57287"/>
        <dbReference type="ChEBI" id="CHEBI:57384"/>
        <dbReference type="ChEBI" id="CHEBI:85008"/>
        <dbReference type="EC" id="2.3.1.74"/>
    </reaction>
</comment>
<comment type="pathway">
    <text>Secondary metabolite biosynthesis; flavonoid biosynthesis.</text>
</comment>
<comment type="similarity">
    <text evidence="2">Belongs to the thiolase-like superfamily. Chalcone/stilbene synthases family.</text>
</comment>
<protein>
    <recommendedName>
        <fullName>Chalcone synthase</fullName>
        <ecNumber>2.3.1.74</ecNumber>
    </recommendedName>
    <alternativeName>
        <fullName>Naringenin-chalcone synthase</fullName>
    </alternativeName>
</protein>
<name>CHSY_PINSY</name>
<organism>
    <name type="scientific">Pinus sylvestris</name>
    <name type="common">Scotch pine</name>
    <dbReference type="NCBI Taxonomy" id="3349"/>
    <lineage>
        <taxon>Eukaryota</taxon>
        <taxon>Viridiplantae</taxon>
        <taxon>Streptophyta</taxon>
        <taxon>Embryophyta</taxon>
        <taxon>Tracheophyta</taxon>
        <taxon>Spermatophyta</taxon>
        <taxon>Pinopsida</taxon>
        <taxon>Pinidae</taxon>
        <taxon>Conifers I</taxon>
        <taxon>Pinales</taxon>
        <taxon>Pinaceae</taxon>
        <taxon>Pinus</taxon>
        <taxon>Pinus subgen. Pinus</taxon>
    </lineage>
</organism>